<comment type="function">
    <text evidence="1">Converts heme B (protoheme IX) to heme O by substitution of the vinyl group on carbon 2 of heme B porphyrin ring with a hydroxyethyl farnesyl side group.</text>
</comment>
<comment type="catalytic activity">
    <reaction evidence="1">
        <text>heme b + (2E,6E)-farnesyl diphosphate + H2O = Fe(II)-heme o + diphosphate</text>
        <dbReference type="Rhea" id="RHEA:28070"/>
        <dbReference type="ChEBI" id="CHEBI:15377"/>
        <dbReference type="ChEBI" id="CHEBI:33019"/>
        <dbReference type="ChEBI" id="CHEBI:60344"/>
        <dbReference type="ChEBI" id="CHEBI:60530"/>
        <dbReference type="ChEBI" id="CHEBI:175763"/>
        <dbReference type="EC" id="2.5.1.141"/>
    </reaction>
</comment>
<comment type="pathway">
    <text evidence="1">Porphyrin-containing compound metabolism; heme O biosynthesis; heme O from protoheme: step 1/1.</text>
</comment>
<comment type="subcellular location">
    <subcellularLocation>
        <location evidence="1">Cell inner membrane</location>
        <topology evidence="1">Multi-pass membrane protein</topology>
    </subcellularLocation>
</comment>
<comment type="miscellaneous">
    <text evidence="1">Carbon 2 of the heme B porphyrin ring is defined according to the Fischer nomenclature.</text>
</comment>
<comment type="similarity">
    <text evidence="1">Belongs to the UbiA prenyltransferase family. Protoheme IX farnesyltransferase subfamily.</text>
</comment>
<dbReference type="EC" id="2.5.1.141" evidence="1"/>
<dbReference type="EMBL" id="CP000304">
    <property type="protein sequence ID" value="ABP81793.1"/>
    <property type="molecule type" value="Genomic_DNA"/>
</dbReference>
<dbReference type="RefSeq" id="WP_011915172.1">
    <property type="nucleotide sequence ID" value="NC_009434.1"/>
</dbReference>
<dbReference type="SMR" id="A4VS42"/>
<dbReference type="GeneID" id="75212605"/>
<dbReference type="KEGG" id="psa:PST_4171"/>
<dbReference type="eggNOG" id="COG0109">
    <property type="taxonomic scope" value="Bacteria"/>
</dbReference>
<dbReference type="HOGENOM" id="CLU_029631_0_2_6"/>
<dbReference type="UniPathway" id="UPA00834">
    <property type="reaction ID" value="UER00712"/>
</dbReference>
<dbReference type="Proteomes" id="UP000000233">
    <property type="component" value="Chromosome"/>
</dbReference>
<dbReference type="GO" id="GO:0005886">
    <property type="term" value="C:plasma membrane"/>
    <property type="evidence" value="ECO:0007669"/>
    <property type="project" value="UniProtKB-SubCell"/>
</dbReference>
<dbReference type="GO" id="GO:0008495">
    <property type="term" value="F:protoheme IX farnesyltransferase activity"/>
    <property type="evidence" value="ECO:0007669"/>
    <property type="project" value="UniProtKB-UniRule"/>
</dbReference>
<dbReference type="GO" id="GO:0048034">
    <property type="term" value="P:heme O biosynthetic process"/>
    <property type="evidence" value="ECO:0007669"/>
    <property type="project" value="UniProtKB-UniRule"/>
</dbReference>
<dbReference type="CDD" id="cd13957">
    <property type="entry name" value="PT_UbiA_Cox10"/>
    <property type="match status" value="1"/>
</dbReference>
<dbReference type="FunFam" id="1.10.357.140:FF:000001">
    <property type="entry name" value="Protoheme IX farnesyltransferase"/>
    <property type="match status" value="1"/>
</dbReference>
<dbReference type="Gene3D" id="1.10.357.140">
    <property type="entry name" value="UbiA prenyltransferase"/>
    <property type="match status" value="1"/>
</dbReference>
<dbReference type="HAMAP" id="MF_00154">
    <property type="entry name" value="CyoE_CtaB"/>
    <property type="match status" value="1"/>
</dbReference>
<dbReference type="InterPro" id="IPR006369">
    <property type="entry name" value="Protohaem_IX_farnesylTrfase"/>
</dbReference>
<dbReference type="InterPro" id="IPR000537">
    <property type="entry name" value="UbiA_prenyltransferase"/>
</dbReference>
<dbReference type="InterPro" id="IPR030470">
    <property type="entry name" value="UbiA_prenylTrfase_CS"/>
</dbReference>
<dbReference type="InterPro" id="IPR044878">
    <property type="entry name" value="UbiA_sf"/>
</dbReference>
<dbReference type="NCBIfam" id="TIGR01473">
    <property type="entry name" value="cyoE_ctaB"/>
    <property type="match status" value="1"/>
</dbReference>
<dbReference type="NCBIfam" id="NF003349">
    <property type="entry name" value="PRK04375.1-2"/>
    <property type="match status" value="1"/>
</dbReference>
<dbReference type="PANTHER" id="PTHR43448:SF7">
    <property type="entry name" value="4-HYDROXYBENZOATE SOLANESYLTRANSFERASE"/>
    <property type="match status" value="1"/>
</dbReference>
<dbReference type="PANTHER" id="PTHR43448">
    <property type="entry name" value="PROTOHEME IX FARNESYLTRANSFERASE, MITOCHONDRIAL"/>
    <property type="match status" value="1"/>
</dbReference>
<dbReference type="Pfam" id="PF01040">
    <property type="entry name" value="UbiA"/>
    <property type="match status" value="1"/>
</dbReference>
<dbReference type="PROSITE" id="PS00943">
    <property type="entry name" value="UBIA"/>
    <property type="match status" value="1"/>
</dbReference>
<organism>
    <name type="scientific">Stutzerimonas stutzeri (strain A1501)</name>
    <name type="common">Pseudomonas stutzeri</name>
    <dbReference type="NCBI Taxonomy" id="379731"/>
    <lineage>
        <taxon>Bacteria</taxon>
        <taxon>Pseudomonadati</taxon>
        <taxon>Pseudomonadota</taxon>
        <taxon>Gammaproteobacteria</taxon>
        <taxon>Pseudomonadales</taxon>
        <taxon>Pseudomonadaceae</taxon>
        <taxon>Stutzerimonas</taxon>
    </lineage>
</organism>
<accession>A4VS42</accession>
<name>CYOE_STUS1</name>
<keyword id="KW-0997">Cell inner membrane</keyword>
<keyword id="KW-1003">Cell membrane</keyword>
<keyword id="KW-0350">Heme biosynthesis</keyword>
<keyword id="KW-0472">Membrane</keyword>
<keyword id="KW-1185">Reference proteome</keyword>
<keyword id="KW-0808">Transferase</keyword>
<keyword id="KW-0812">Transmembrane</keyword>
<keyword id="KW-1133">Transmembrane helix</keyword>
<proteinExistence type="inferred from homology"/>
<sequence length="299" mass="32608">MATLLSERGAQASWRDYLELTKPKVVLLMLITSLVGMFLATRAGVPWTVLLFGNLGIALCAGGAAAVNHVVDRQIDSVMARTHKRPLAEGRVSPAAALTFAFVLGVSGLALLLTFTNALAAWLTLASLIGYAVIYTGFLKRATPQNIVIGGLAGAAPPLLGWVAVTGQVTAEPLLLVLIIFAWTPPHFWALAIHRKDEYAKVNVPMLPVTHGVHYTKVHILLYTAMLLAVSFMPFAIHMSGPLYLAAAVLLGARFLYWTIALYRDSRPHAAIKTFKFSIWYLFALFIALLVDHYLLLDF</sequence>
<evidence type="ECO:0000255" key="1">
    <source>
        <dbReference type="HAMAP-Rule" id="MF_00154"/>
    </source>
</evidence>
<reference key="1">
    <citation type="journal article" date="2008" name="Proc. Natl. Acad. Sci. U.S.A.">
        <title>Nitrogen fixation island and rhizosphere competence traits in the genome of root-associated Pseudomonas stutzeri A1501.</title>
        <authorList>
            <person name="Yan Y."/>
            <person name="Yang J."/>
            <person name="Dou Y."/>
            <person name="Chen M."/>
            <person name="Ping S."/>
            <person name="Peng J."/>
            <person name="Lu W."/>
            <person name="Zhang W."/>
            <person name="Yao Z."/>
            <person name="Li H."/>
            <person name="Liu W."/>
            <person name="He S."/>
            <person name="Geng L."/>
            <person name="Zhang X."/>
            <person name="Yang F."/>
            <person name="Yu H."/>
            <person name="Zhan Y."/>
            <person name="Li D."/>
            <person name="Lin Z."/>
            <person name="Wang Y."/>
            <person name="Elmerich C."/>
            <person name="Lin M."/>
            <person name="Jin Q."/>
        </authorList>
    </citation>
    <scope>NUCLEOTIDE SEQUENCE [LARGE SCALE GENOMIC DNA]</scope>
    <source>
        <strain>A1501</strain>
    </source>
</reference>
<protein>
    <recommendedName>
        <fullName evidence="1">Protoheme IX farnesyltransferase</fullName>
        <ecNumber evidence="1">2.5.1.141</ecNumber>
    </recommendedName>
    <alternativeName>
        <fullName evidence="1">Heme B farnesyltransferase</fullName>
    </alternativeName>
    <alternativeName>
        <fullName evidence="1">Heme O synthase</fullName>
    </alternativeName>
</protein>
<gene>
    <name evidence="1" type="primary">cyoE</name>
    <name type="ordered locus">PST_4171</name>
</gene>
<feature type="chain" id="PRO_0000326929" description="Protoheme IX farnesyltransferase">
    <location>
        <begin position="1"/>
        <end position="299"/>
    </location>
</feature>
<feature type="transmembrane region" description="Helical" evidence="1">
    <location>
        <begin position="25"/>
        <end position="45"/>
    </location>
</feature>
<feature type="transmembrane region" description="Helical" evidence="1">
    <location>
        <begin position="47"/>
        <end position="67"/>
    </location>
</feature>
<feature type="transmembrane region" description="Helical" evidence="1">
    <location>
        <begin position="95"/>
        <end position="115"/>
    </location>
</feature>
<feature type="transmembrane region" description="Helical" evidence="1">
    <location>
        <begin position="119"/>
        <end position="139"/>
    </location>
</feature>
<feature type="transmembrane region" description="Helical" evidence="1">
    <location>
        <begin position="147"/>
        <end position="167"/>
    </location>
</feature>
<feature type="transmembrane region" description="Helical" evidence="1">
    <location>
        <begin position="173"/>
        <end position="193"/>
    </location>
</feature>
<feature type="transmembrane region" description="Helical" evidence="1">
    <location>
        <begin position="218"/>
        <end position="238"/>
    </location>
</feature>
<feature type="transmembrane region" description="Helical" evidence="1">
    <location>
        <begin position="243"/>
        <end position="263"/>
    </location>
</feature>
<feature type="transmembrane region" description="Helical" evidence="1">
    <location>
        <begin position="277"/>
        <end position="297"/>
    </location>
</feature>